<reference key="1">
    <citation type="submission" date="2009-03" db="EMBL/GenBank/DDBJ databases">
        <title>Brucella melitensis ATCC 23457 whole genome shotgun sequencing project.</title>
        <authorList>
            <person name="Setubal J.C."/>
            <person name="Boyle S."/>
            <person name="Crasta O.R."/>
            <person name="Gillespie J.J."/>
            <person name="Kenyon R.W."/>
            <person name="Lu J."/>
            <person name="Mane S."/>
            <person name="Nagrani S."/>
            <person name="Shallom J.M."/>
            <person name="Shallom S."/>
            <person name="Shukla M."/>
            <person name="Snyder E.E."/>
            <person name="Sobral B.W."/>
            <person name="Wattam A.R."/>
            <person name="Will R."/>
            <person name="Williams K."/>
            <person name="Yoo H."/>
            <person name="Munk C."/>
            <person name="Tapia R."/>
            <person name="Han C."/>
            <person name="Detter J.C."/>
            <person name="Bruce D."/>
            <person name="Brettin T.S."/>
        </authorList>
    </citation>
    <scope>NUCLEOTIDE SEQUENCE [LARGE SCALE GENOMIC DNA]</scope>
    <source>
        <strain>ATCC 23457</strain>
    </source>
</reference>
<gene>
    <name evidence="1" type="primary">efp</name>
    <name type="ordered locus">BMEA_A1762</name>
</gene>
<keyword id="KW-0963">Cytoplasm</keyword>
<keyword id="KW-0251">Elongation factor</keyword>
<keyword id="KW-0648">Protein biosynthesis</keyword>
<protein>
    <recommendedName>
        <fullName evidence="1">Elongation factor P</fullName>
        <shortName evidence="1">EF-P</shortName>
    </recommendedName>
</protein>
<dbReference type="EMBL" id="CP001488">
    <property type="protein sequence ID" value="ACO01444.1"/>
    <property type="molecule type" value="Genomic_DNA"/>
</dbReference>
<dbReference type="RefSeq" id="WP_002964799.1">
    <property type="nucleotide sequence ID" value="NC_012441.1"/>
</dbReference>
<dbReference type="SMR" id="C0REX2"/>
<dbReference type="GeneID" id="93017928"/>
<dbReference type="KEGG" id="bmi:BMEA_A1762"/>
<dbReference type="HOGENOM" id="CLU_074944_1_1_5"/>
<dbReference type="UniPathway" id="UPA00345"/>
<dbReference type="Proteomes" id="UP000001748">
    <property type="component" value="Chromosome I"/>
</dbReference>
<dbReference type="GO" id="GO:0005737">
    <property type="term" value="C:cytoplasm"/>
    <property type="evidence" value="ECO:0007669"/>
    <property type="project" value="UniProtKB-SubCell"/>
</dbReference>
<dbReference type="GO" id="GO:0003746">
    <property type="term" value="F:translation elongation factor activity"/>
    <property type="evidence" value="ECO:0007669"/>
    <property type="project" value="UniProtKB-UniRule"/>
</dbReference>
<dbReference type="GO" id="GO:0043043">
    <property type="term" value="P:peptide biosynthetic process"/>
    <property type="evidence" value="ECO:0007669"/>
    <property type="project" value="InterPro"/>
</dbReference>
<dbReference type="CDD" id="cd04470">
    <property type="entry name" value="S1_EF-P_repeat_1"/>
    <property type="match status" value="1"/>
</dbReference>
<dbReference type="CDD" id="cd05794">
    <property type="entry name" value="S1_EF-P_repeat_2"/>
    <property type="match status" value="1"/>
</dbReference>
<dbReference type="FunFam" id="2.30.30.30:FF:000003">
    <property type="entry name" value="Elongation factor P"/>
    <property type="match status" value="1"/>
</dbReference>
<dbReference type="FunFam" id="2.40.50.140:FF:000004">
    <property type="entry name" value="Elongation factor P"/>
    <property type="match status" value="1"/>
</dbReference>
<dbReference type="FunFam" id="2.40.50.140:FF:000009">
    <property type="entry name" value="Elongation factor P"/>
    <property type="match status" value="1"/>
</dbReference>
<dbReference type="Gene3D" id="2.30.30.30">
    <property type="match status" value="1"/>
</dbReference>
<dbReference type="Gene3D" id="2.40.50.140">
    <property type="entry name" value="Nucleic acid-binding proteins"/>
    <property type="match status" value="2"/>
</dbReference>
<dbReference type="HAMAP" id="MF_00141">
    <property type="entry name" value="EF_P"/>
    <property type="match status" value="1"/>
</dbReference>
<dbReference type="InterPro" id="IPR015365">
    <property type="entry name" value="Elong-fact-P_C"/>
</dbReference>
<dbReference type="InterPro" id="IPR012340">
    <property type="entry name" value="NA-bd_OB-fold"/>
</dbReference>
<dbReference type="InterPro" id="IPR014722">
    <property type="entry name" value="Rib_uL2_dom2"/>
</dbReference>
<dbReference type="InterPro" id="IPR020599">
    <property type="entry name" value="Transl_elong_fac_P/YeiP"/>
</dbReference>
<dbReference type="InterPro" id="IPR013185">
    <property type="entry name" value="Transl_elong_KOW-like"/>
</dbReference>
<dbReference type="InterPro" id="IPR001059">
    <property type="entry name" value="Transl_elong_P/YeiP_cen"/>
</dbReference>
<dbReference type="InterPro" id="IPR013852">
    <property type="entry name" value="Transl_elong_P/YeiP_CS"/>
</dbReference>
<dbReference type="InterPro" id="IPR011768">
    <property type="entry name" value="Transl_elongation_fac_P"/>
</dbReference>
<dbReference type="InterPro" id="IPR008991">
    <property type="entry name" value="Translation_prot_SH3-like_sf"/>
</dbReference>
<dbReference type="NCBIfam" id="TIGR00038">
    <property type="entry name" value="efp"/>
    <property type="match status" value="1"/>
</dbReference>
<dbReference type="NCBIfam" id="NF001810">
    <property type="entry name" value="PRK00529.1"/>
    <property type="match status" value="1"/>
</dbReference>
<dbReference type="PANTHER" id="PTHR30053">
    <property type="entry name" value="ELONGATION FACTOR P"/>
    <property type="match status" value="1"/>
</dbReference>
<dbReference type="PANTHER" id="PTHR30053:SF14">
    <property type="entry name" value="TRANSLATION ELONGATION FACTOR KOW-LIKE DOMAIN-CONTAINING PROTEIN"/>
    <property type="match status" value="1"/>
</dbReference>
<dbReference type="Pfam" id="PF01132">
    <property type="entry name" value="EFP"/>
    <property type="match status" value="1"/>
</dbReference>
<dbReference type="Pfam" id="PF08207">
    <property type="entry name" value="EFP_N"/>
    <property type="match status" value="1"/>
</dbReference>
<dbReference type="Pfam" id="PF09285">
    <property type="entry name" value="Elong-fact-P_C"/>
    <property type="match status" value="1"/>
</dbReference>
<dbReference type="PIRSF" id="PIRSF005901">
    <property type="entry name" value="EF-P"/>
    <property type="match status" value="1"/>
</dbReference>
<dbReference type="SMART" id="SM01185">
    <property type="entry name" value="EFP"/>
    <property type="match status" value="1"/>
</dbReference>
<dbReference type="SMART" id="SM00841">
    <property type="entry name" value="Elong-fact-P_C"/>
    <property type="match status" value="1"/>
</dbReference>
<dbReference type="SUPFAM" id="SSF50249">
    <property type="entry name" value="Nucleic acid-binding proteins"/>
    <property type="match status" value="2"/>
</dbReference>
<dbReference type="SUPFAM" id="SSF50104">
    <property type="entry name" value="Translation proteins SH3-like domain"/>
    <property type="match status" value="1"/>
</dbReference>
<dbReference type="PROSITE" id="PS01275">
    <property type="entry name" value="EFP"/>
    <property type="match status" value="1"/>
</dbReference>
<comment type="function">
    <text evidence="1">Involved in peptide bond synthesis. Stimulates efficient translation and peptide-bond synthesis on native or reconstituted 70S ribosomes in vitro. Probably functions indirectly by altering the affinity of the ribosome for aminoacyl-tRNA, thus increasing their reactivity as acceptors for peptidyl transferase.</text>
</comment>
<comment type="pathway">
    <text evidence="1">Protein biosynthesis; polypeptide chain elongation.</text>
</comment>
<comment type="subcellular location">
    <subcellularLocation>
        <location evidence="1">Cytoplasm</location>
    </subcellularLocation>
</comment>
<comment type="similarity">
    <text evidence="1">Belongs to the elongation factor P family.</text>
</comment>
<feature type="chain" id="PRO_1000122996" description="Elongation factor P">
    <location>
        <begin position="1"/>
        <end position="186"/>
    </location>
</feature>
<sequence>MKINGNEIRPGNVIEHEGGLWVAVKTNAVKPGKGGAYNQVELKNLINGTKLNERFRAAESVERVRLEQKDFSFLYEQGEALIFMDTETYEQLELQKDFVGDRAAFLQDGMMVTVELYEEKPIGIRLPDQVTLAITEADPVVKGQTAASSYKPAVLENGIRIPVPPFIASGERVIVDTNELTYISRA</sequence>
<name>EFP_BRUMB</name>
<accession>C0REX2</accession>
<evidence type="ECO:0000255" key="1">
    <source>
        <dbReference type="HAMAP-Rule" id="MF_00141"/>
    </source>
</evidence>
<organism>
    <name type="scientific">Brucella melitensis biotype 2 (strain ATCC 23457)</name>
    <dbReference type="NCBI Taxonomy" id="546272"/>
    <lineage>
        <taxon>Bacteria</taxon>
        <taxon>Pseudomonadati</taxon>
        <taxon>Pseudomonadota</taxon>
        <taxon>Alphaproteobacteria</taxon>
        <taxon>Hyphomicrobiales</taxon>
        <taxon>Brucellaceae</taxon>
        <taxon>Brucella/Ochrobactrum group</taxon>
        <taxon>Brucella</taxon>
    </lineage>
</organism>
<proteinExistence type="inferred from homology"/>